<name>RNE_MYCTU</name>
<proteinExistence type="evidence at protein level"/>
<evidence type="ECO:0000250" key="1">
    <source>
        <dbReference type="UniProtKB" id="A0R152"/>
    </source>
</evidence>
<evidence type="ECO:0000250" key="2">
    <source>
        <dbReference type="UniProtKB" id="P21513"/>
    </source>
</evidence>
<evidence type="ECO:0000255" key="3">
    <source>
        <dbReference type="PROSITE-ProRule" id="PRU00180"/>
    </source>
</evidence>
<evidence type="ECO:0000256" key="4">
    <source>
        <dbReference type="SAM" id="MobiDB-lite"/>
    </source>
</evidence>
<evidence type="ECO:0000269" key="5">
    <source>
    </source>
</evidence>
<evidence type="ECO:0000305" key="6"/>
<evidence type="ECO:0000305" key="7">
    <source>
    </source>
</evidence>
<evidence type="ECO:0000312" key="8">
    <source>
        <dbReference type="EMBL" id="CCP45237.1"/>
    </source>
</evidence>
<evidence type="ECO:0007744" key="9">
    <source>
    </source>
</evidence>
<keyword id="KW-0963">Cytoplasm</keyword>
<keyword id="KW-0378">Hydrolase</keyword>
<keyword id="KW-0460">Magnesium</keyword>
<keyword id="KW-0479">Metal-binding</keyword>
<keyword id="KW-0507">mRNA processing</keyword>
<keyword id="KW-1185">Reference proteome</keyword>
<keyword id="KW-0694">RNA-binding</keyword>
<keyword id="KW-0698">rRNA processing</keyword>
<keyword id="KW-0699">rRNA-binding</keyword>
<keyword id="KW-0819">tRNA processing</keyword>
<keyword id="KW-0862">Zinc</keyword>
<sequence length="953" mass="103390">MIDGAPPSDPPEPSQHEELPDRLRVHSLARTLGTTSRRVLDALTALDGRVRSAHSTVDRVDAVRVRDLLATHLETAGVLAASVHAPEASEEPESRLMLETQETRNADVERPHYMPLFVAPQPIPEPLADDEDVDDGPDYVADDSDADDEGQLDRPANRRRRRGRRGRGRGRGEQGGSDGDPVDQQSEPRAQQFTSADAAETDDGDDRDSEDTEAGDNGEDENGSLEAGNRRRRRRRRRKSASGDDNDAALEGPLPDDPPNTVVHERVPRAGDKAGNSQDGGSGSTEIKGIDGSTRLEAKRQRRRDGRDAGRRRPPVLSEAEFLARREAVERVMVVRDRVRTEPPLPGTRYTQIAVLEDGIVVEHFVTSAASASLVGNIYLGIVQNVLPSMEAAFVDIGRGRNGVLYAGEVNWDAAGLGGADRKIEQALKPGDYVVVQVSKDPVGHKGARLTTQVSLAGRFLVYVPGASSTGISRKLPDTERQRLKEILREVVPSDAGVIIRTASEGVKEDDIRADVARLRERWEQIEAKAQETKEKAAGAAVALYEEPDVLVKVIRDLFNEDFVGLIVSGDEAWNTINEYVNSVAPELVSKLTKYESADGPDGQSAPDVFTVHRIDEQLAKAMDRKVWLPSGGTLVIDRTEAMTVIDVNTGKFTGAGGNLEQTVTKNNLEAAEEIVRQLRLRDIGGIVVIDFIDMVLESNRDLVLRRLTESLARDRTRHQVSEVTSLGLVQLTRKRLGTGLIEAFSTSCPNCSGRGILLHADPVDSAAATGRKSEPGARRGKRSKKSRSEESSDRSMVAKVPVHAPGEHPMFKAMAAGLSSLAGRGDEESGEPAAELAEQAGDQPPTDLDDTAQADFEDTEDTDEDEDELDADEDLEDLDDEDLDEDLDVEDSDSDDEDSDEDAADADVDEEDAAGLDGSPGEVDVPGVTELAPTRPRRRVAGRPAGPPIRLD</sequence>
<comment type="function">
    <text evidence="1 5">Endoribonuclease that plays a central role in RNA processing and decay. Plays a major role in pre-16S rRNA maturation, probably generating the mature 5'-end, and a minor role in pre-5S and pre-23S rRNA maturation. Probably also processes tRNA (By similarity). RNase E and HupB jointly contribute to cellular adaptation to changing growth conditions and survival during antibiotic treatment and in the host (PubMed:35521527).</text>
</comment>
<comment type="catalytic activity">
    <reaction>
        <text>Endonucleolytic cleavage of single-stranded RNA in A- and U-rich regions.</text>
        <dbReference type="EC" id="3.1.26.12"/>
    </reaction>
</comment>
<comment type="cofactor">
    <cofactor evidence="2">
        <name>Mg(2+)</name>
        <dbReference type="ChEBI" id="CHEBI:18420"/>
    </cofactor>
    <text evidence="2">Binds 1 Mg(2+) ion per subunit.</text>
</comment>
<comment type="cofactor">
    <cofactor evidence="2">
        <name>Zn(2+)</name>
        <dbReference type="ChEBI" id="CHEBI:29105"/>
    </cofactor>
    <text evidence="2">Binds 2 Zn(2+) ions per homotetramer. Zinc ions are bound between subunits.</text>
</comment>
<comment type="subunit">
    <text evidence="2 7">Assembles into a homotetramer formed by a dimer of dimers (By similarity). Interacts with DNA-binding protein HU (hupB) (Probable) (PubMed:35521527).</text>
</comment>
<comment type="subcellular location">
    <subcellularLocation>
        <location evidence="5">Cytoplasm</location>
    </subcellularLocation>
    <text evidence="5">Has dynamic expression patterns, often present as foci near the mid-cell or new cell pole in addition to a weaker overall cytoplasmic distribution. About 60% colocalizes with HupB and about 25% with ribosomes (PubMed:35521527).</text>
</comment>
<comment type="disruption phenotype">
    <text evidence="5">Essential, it cannot be deleted. Depletion experiments show a decrease in growth rate, decreased processing of furA-katG operon mRNA and decreased expression levels of many transcripts, accounting for the metabolic decrease. Cells are more sensitive to isoniazid (INH). Murine macrophage infection is impaired.</text>
</comment>
<comment type="similarity">
    <text evidence="6">Belongs to the RNase E/G family.</text>
</comment>
<feature type="chain" id="PRO_0000458842" description="Ribonuclease E">
    <location>
        <begin position="1"/>
        <end position="953"/>
    </location>
</feature>
<feature type="domain" description="S1 motif" evidence="3">
    <location>
        <begin position="376"/>
        <end position="453"/>
    </location>
</feature>
<feature type="region of interest" description="Disordered" evidence="4">
    <location>
        <begin position="1"/>
        <end position="23"/>
    </location>
</feature>
<feature type="region of interest" description="Disordered" evidence="4">
    <location>
        <begin position="118"/>
        <end position="314"/>
    </location>
</feature>
<feature type="region of interest" description="Disordered" evidence="4">
    <location>
        <begin position="766"/>
        <end position="808"/>
    </location>
</feature>
<feature type="region of interest" description="Disordered" evidence="4">
    <location>
        <begin position="822"/>
        <end position="953"/>
    </location>
</feature>
<feature type="compositionally biased region" description="Basic and acidic residues" evidence="4">
    <location>
        <begin position="14"/>
        <end position="23"/>
    </location>
</feature>
<feature type="compositionally biased region" description="Acidic residues" evidence="4">
    <location>
        <begin position="127"/>
        <end position="150"/>
    </location>
</feature>
<feature type="compositionally biased region" description="Basic residues" evidence="4">
    <location>
        <begin position="157"/>
        <end position="169"/>
    </location>
</feature>
<feature type="compositionally biased region" description="Polar residues" evidence="4">
    <location>
        <begin position="183"/>
        <end position="193"/>
    </location>
</feature>
<feature type="compositionally biased region" description="Acidic residues" evidence="4">
    <location>
        <begin position="199"/>
        <end position="223"/>
    </location>
</feature>
<feature type="compositionally biased region" description="Basic residues" evidence="4">
    <location>
        <begin position="230"/>
        <end position="240"/>
    </location>
</feature>
<feature type="compositionally biased region" description="Basic and acidic residues" evidence="4">
    <location>
        <begin position="263"/>
        <end position="272"/>
    </location>
</feature>
<feature type="compositionally biased region" description="Basic and acidic residues" evidence="4">
    <location>
        <begin position="294"/>
        <end position="311"/>
    </location>
</feature>
<feature type="compositionally biased region" description="Acidic residues" evidence="4">
    <location>
        <begin position="848"/>
        <end position="915"/>
    </location>
</feature>
<feature type="binding site" evidence="2">
    <location>
        <position position="647"/>
    </location>
    <ligand>
        <name>Mg(2+)</name>
        <dbReference type="ChEBI" id="CHEBI:18420"/>
        <note>catalytic</note>
    </ligand>
</feature>
<feature type="binding site" evidence="2">
    <location>
        <position position="691"/>
    </location>
    <ligand>
        <name>Mg(2+)</name>
        <dbReference type="ChEBI" id="CHEBI:18420"/>
        <note>catalytic</note>
    </ligand>
</feature>
<feature type="binding site" evidence="2">
    <location>
        <position position="749"/>
    </location>
    <ligand>
        <name>Zn(2+)</name>
        <dbReference type="ChEBI" id="CHEBI:29105"/>
        <note>ligand shared between dimeric partners</note>
    </ligand>
</feature>
<feature type="binding site" evidence="2">
    <location>
        <position position="752"/>
    </location>
    <ligand>
        <name>Zn(2+)</name>
        <dbReference type="ChEBI" id="CHEBI:29105"/>
        <note>ligand shared between dimeric partners</note>
    </ligand>
</feature>
<dbReference type="EC" id="3.1.26.12"/>
<dbReference type="EMBL" id="AL123456">
    <property type="protein sequence ID" value="CCP45237.1"/>
    <property type="molecule type" value="Genomic_DNA"/>
</dbReference>
<dbReference type="RefSeq" id="NP_216960.1">
    <property type="nucleotide sequence ID" value="NC_000962.3"/>
</dbReference>
<dbReference type="RefSeq" id="WP_003899322.1">
    <property type="nucleotide sequence ID" value="NZ_NVQJ01000024.1"/>
</dbReference>
<dbReference type="SMR" id="P71905"/>
<dbReference type="FunCoup" id="P71905">
    <property type="interactions" value="11"/>
</dbReference>
<dbReference type="STRING" id="83332.Rv2444c"/>
<dbReference type="PaxDb" id="83332-Rv2444c"/>
<dbReference type="GeneID" id="885911"/>
<dbReference type="KEGG" id="mtu:Rv2444c"/>
<dbReference type="KEGG" id="mtv:RVBD_2444c"/>
<dbReference type="PATRIC" id="fig|83332.111.peg.2736"/>
<dbReference type="TubercuList" id="Rv2444c"/>
<dbReference type="eggNOG" id="COG1530">
    <property type="taxonomic scope" value="Bacteria"/>
</dbReference>
<dbReference type="InParanoid" id="P71905"/>
<dbReference type="OrthoDB" id="9804278at2"/>
<dbReference type="PhylomeDB" id="P71905"/>
<dbReference type="Proteomes" id="UP000001584">
    <property type="component" value="Chromosome"/>
</dbReference>
<dbReference type="GO" id="GO:0005737">
    <property type="term" value="C:cytoplasm"/>
    <property type="evidence" value="ECO:0000318"/>
    <property type="project" value="GO_Central"/>
</dbReference>
<dbReference type="GO" id="GO:0005829">
    <property type="term" value="C:cytosol"/>
    <property type="evidence" value="ECO:0007005"/>
    <property type="project" value="MTBBASE"/>
</dbReference>
<dbReference type="GO" id="GO:0009274">
    <property type="term" value="C:peptidoglycan-based cell wall"/>
    <property type="evidence" value="ECO:0007005"/>
    <property type="project" value="MTBBASE"/>
</dbReference>
<dbReference type="GO" id="GO:0005886">
    <property type="term" value="C:plasma membrane"/>
    <property type="evidence" value="ECO:0007005"/>
    <property type="project" value="MTBBASE"/>
</dbReference>
<dbReference type="GO" id="GO:0046872">
    <property type="term" value="F:metal ion binding"/>
    <property type="evidence" value="ECO:0007669"/>
    <property type="project" value="UniProtKB-KW"/>
</dbReference>
<dbReference type="GO" id="GO:0004540">
    <property type="term" value="F:RNA nuclease activity"/>
    <property type="evidence" value="ECO:0000318"/>
    <property type="project" value="GO_Central"/>
</dbReference>
<dbReference type="GO" id="GO:0019843">
    <property type="term" value="F:rRNA binding"/>
    <property type="evidence" value="ECO:0007669"/>
    <property type="project" value="UniProtKB-KW"/>
</dbReference>
<dbReference type="GO" id="GO:0006397">
    <property type="term" value="P:mRNA processing"/>
    <property type="evidence" value="ECO:0007669"/>
    <property type="project" value="UniProtKB-KW"/>
</dbReference>
<dbReference type="GO" id="GO:0006364">
    <property type="term" value="P:rRNA processing"/>
    <property type="evidence" value="ECO:0000318"/>
    <property type="project" value="GO_Central"/>
</dbReference>
<dbReference type="GO" id="GO:0008033">
    <property type="term" value="P:tRNA processing"/>
    <property type="evidence" value="ECO:0007669"/>
    <property type="project" value="UniProtKB-KW"/>
</dbReference>
<dbReference type="CDD" id="cd04453">
    <property type="entry name" value="S1_RNase_E"/>
    <property type="match status" value="1"/>
</dbReference>
<dbReference type="FunFam" id="2.40.50.140:FF:000066">
    <property type="entry name" value="Ribonuclease E"/>
    <property type="match status" value="1"/>
</dbReference>
<dbReference type="Gene3D" id="1.10.10.2480">
    <property type="match status" value="1"/>
</dbReference>
<dbReference type="Gene3D" id="2.40.50.140">
    <property type="entry name" value="Nucleic acid-binding proteins"/>
    <property type="match status" value="1"/>
</dbReference>
<dbReference type="InterPro" id="IPR012340">
    <property type="entry name" value="NA-bd_OB-fold"/>
</dbReference>
<dbReference type="InterPro" id="IPR019307">
    <property type="entry name" value="RNA-bd_AU-1/RNase_E/G"/>
</dbReference>
<dbReference type="InterPro" id="IPR004659">
    <property type="entry name" value="RNase_E/G"/>
</dbReference>
<dbReference type="InterPro" id="IPR003029">
    <property type="entry name" value="S1_domain"/>
</dbReference>
<dbReference type="NCBIfam" id="TIGR00757">
    <property type="entry name" value="RNaseEG"/>
    <property type="match status" value="1"/>
</dbReference>
<dbReference type="PANTHER" id="PTHR30001">
    <property type="entry name" value="RIBONUCLEASE"/>
    <property type="match status" value="1"/>
</dbReference>
<dbReference type="PANTHER" id="PTHR30001:SF0">
    <property type="entry name" value="RIBONUCLEASE G"/>
    <property type="match status" value="1"/>
</dbReference>
<dbReference type="Pfam" id="PF10150">
    <property type="entry name" value="RNase_E_G"/>
    <property type="match status" value="1"/>
</dbReference>
<dbReference type="SMART" id="SM00316">
    <property type="entry name" value="S1"/>
    <property type="match status" value="1"/>
</dbReference>
<dbReference type="SUPFAM" id="SSF50249">
    <property type="entry name" value="Nucleic acid-binding proteins"/>
    <property type="match status" value="1"/>
</dbReference>
<dbReference type="PROSITE" id="PS50126">
    <property type="entry name" value="S1"/>
    <property type="match status" value="1"/>
</dbReference>
<gene>
    <name evidence="8" type="primary">rne</name>
    <name evidence="8" type="ordered locus">Rv2444c</name>
</gene>
<accession>P71905</accession>
<accession>F2GHM4</accession>
<accession>I6YDF2</accession>
<accession>L0TCJ5</accession>
<protein>
    <recommendedName>
        <fullName>Ribonuclease E</fullName>
        <shortName>RNase E</shortName>
        <ecNumber>3.1.26.12</ecNumber>
    </recommendedName>
</protein>
<organism>
    <name type="scientific">Mycobacterium tuberculosis (strain ATCC 25618 / H37Rv)</name>
    <dbReference type="NCBI Taxonomy" id="83332"/>
    <lineage>
        <taxon>Bacteria</taxon>
        <taxon>Bacillati</taxon>
        <taxon>Actinomycetota</taxon>
        <taxon>Actinomycetes</taxon>
        <taxon>Mycobacteriales</taxon>
        <taxon>Mycobacteriaceae</taxon>
        <taxon>Mycobacterium</taxon>
        <taxon>Mycobacterium tuberculosis complex</taxon>
    </lineage>
</organism>
<reference evidence="8" key="1">
    <citation type="journal article" date="1998" name="Nature">
        <title>Deciphering the biology of Mycobacterium tuberculosis from the complete genome sequence.</title>
        <authorList>
            <person name="Cole S.T."/>
            <person name="Brosch R."/>
            <person name="Parkhill J."/>
            <person name="Garnier T."/>
            <person name="Churcher C.M."/>
            <person name="Harris D.E."/>
            <person name="Gordon S.V."/>
            <person name="Eiglmeier K."/>
            <person name="Gas S."/>
            <person name="Barry C.E. III"/>
            <person name="Tekaia F."/>
            <person name="Badcock K."/>
            <person name="Basham D."/>
            <person name="Brown D."/>
            <person name="Chillingworth T."/>
            <person name="Connor R."/>
            <person name="Davies R.M."/>
            <person name="Devlin K."/>
            <person name="Feltwell T."/>
            <person name="Gentles S."/>
            <person name="Hamlin N."/>
            <person name="Holroyd S."/>
            <person name="Hornsby T."/>
            <person name="Jagels K."/>
            <person name="Krogh A."/>
            <person name="McLean J."/>
            <person name="Moule S."/>
            <person name="Murphy L.D."/>
            <person name="Oliver S."/>
            <person name="Osborne J."/>
            <person name="Quail M.A."/>
            <person name="Rajandream M.A."/>
            <person name="Rogers J."/>
            <person name="Rutter S."/>
            <person name="Seeger K."/>
            <person name="Skelton S."/>
            <person name="Squares S."/>
            <person name="Squares R."/>
            <person name="Sulston J.E."/>
            <person name="Taylor K."/>
            <person name="Whitehead S."/>
            <person name="Barrell B.G."/>
        </authorList>
    </citation>
    <scope>NUCLEOTIDE SEQUENCE [LARGE SCALE GENOMIC DNA]</scope>
    <source>
        <strain>ATCC 25618 / H37Rv</strain>
    </source>
</reference>
<reference evidence="9" key="2">
    <citation type="journal article" date="2011" name="Mol. Cell. Proteomics">
        <title>Proteogenomic analysis of Mycobacterium tuberculosis by high resolution mass spectrometry.</title>
        <authorList>
            <person name="Kelkar D.S."/>
            <person name="Kumar D."/>
            <person name="Kumar P."/>
            <person name="Balakrishnan L."/>
            <person name="Muthusamy B."/>
            <person name="Yadav A.K."/>
            <person name="Shrivastava P."/>
            <person name="Marimuthu A."/>
            <person name="Anand S."/>
            <person name="Sundaram H."/>
            <person name="Kingsbury R."/>
            <person name="Harsha H.C."/>
            <person name="Nair B."/>
            <person name="Prasad T.S."/>
            <person name="Chauhan D.S."/>
            <person name="Katoch K."/>
            <person name="Katoch V.M."/>
            <person name="Kumar P."/>
            <person name="Chaerkady R."/>
            <person name="Ramachandran S."/>
            <person name="Dash D."/>
            <person name="Pandey A."/>
        </authorList>
    </citation>
    <scope>IDENTIFICATION BY MASS SPECTROMETRY [LARGE SCALE ANALYSIS]</scope>
</reference>
<reference key="3">
    <citation type="journal article" date="2022" name="IScience">
        <title>RNase E and HupB dynamics foster mycobacterial cell homeostasis and fitness.</title>
        <authorList>
            <person name="Griego A."/>
            <person name="Douche T."/>
            <person name="Gianetto Q.G."/>
            <person name="Matondo M."/>
            <person name="Manina G."/>
        </authorList>
    </citation>
    <scope>FUNCTION</scope>
    <scope>SUBUNIT</scope>
    <scope>SUBCELLULAR LOCATION</scope>
    <scope>DISRUPTION PHENOTYPE</scope>
    <source>
        <strain>ATCC 35801 / TMC 107 / Erdman</strain>
    </source>
</reference>